<dbReference type="EMBL" id="AB017270">
    <property type="protein sequence ID" value="BAA87898.1"/>
    <property type="molecule type" value="mRNA"/>
</dbReference>
<dbReference type="EMBL" id="AB041565">
    <property type="protein sequence ID" value="BAA95049.1"/>
    <property type="status" value="ALT_FRAME"/>
    <property type="molecule type" value="mRNA"/>
</dbReference>
<dbReference type="EMBL" id="AK029307">
    <property type="protein sequence ID" value="BAC26385.1"/>
    <property type="molecule type" value="mRNA"/>
</dbReference>
<dbReference type="EMBL" id="AK030053">
    <property type="protein sequence ID" value="BAC26760.1"/>
    <property type="molecule type" value="mRNA"/>
</dbReference>
<dbReference type="EMBL" id="AK076254">
    <property type="protein sequence ID" value="BAC36276.1"/>
    <property type="molecule type" value="mRNA"/>
</dbReference>
<dbReference type="EMBL" id="AK135038">
    <property type="protein sequence ID" value="BAE22393.1"/>
    <property type="molecule type" value="mRNA"/>
</dbReference>
<dbReference type="EMBL" id="BC034850">
    <property type="protein sequence ID" value="AAH34850.1"/>
    <property type="molecule type" value="mRNA"/>
</dbReference>
<dbReference type="CCDS" id="CCDS14939.1">
    <molecule id="Q9QYM9-1"/>
</dbReference>
<dbReference type="RefSeq" id="NP_062764.1">
    <molecule id="Q9QYM9-1"/>
    <property type="nucleotide sequence ID" value="NM_019790.4"/>
</dbReference>
<dbReference type="RefSeq" id="XP_030111510.1">
    <molecule id="Q9QYM9-1"/>
    <property type="nucleotide sequence ID" value="XM_030255650.2"/>
</dbReference>
<dbReference type="SMR" id="Q9QYM9"/>
<dbReference type="FunCoup" id="Q9QYM9">
    <property type="interactions" value="949"/>
</dbReference>
<dbReference type="IntAct" id="Q9QYM9">
    <property type="interactions" value="1"/>
</dbReference>
<dbReference type="STRING" id="10090.ENSMUSP00000080533"/>
<dbReference type="MEROPS" id="I01.969"/>
<dbReference type="MEROPS" id="I01.978"/>
<dbReference type="GlyCosmos" id="Q9QYM9">
    <property type="glycosylation" value="2 sites, No reported glycans"/>
</dbReference>
<dbReference type="GlyGen" id="Q9QYM9">
    <property type="glycosylation" value="2 sites, 1 N-linked glycan (1 site)"/>
</dbReference>
<dbReference type="PhosphoSitePlus" id="Q9QYM9"/>
<dbReference type="PaxDb" id="10090-ENSMUSP00000080533"/>
<dbReference type="PeptideAtlas" id="Q9QYM9"/>
<dbReference type="ProteomicsDB" id="263159">
    <molecule id="Q9QYM9-1"/>
</dbReference>
<dbReference type="ProteomicsDB" id="263160">
    <molecule id="Q9QYM9-2"/>
</dbReference>
<dbReference type="Antibodypedia" id="2895">
    <property type="antibodies" value="390 antibodies from 31 providers"/>
</dbReference>
<dbReference type="DNASU" id="56363"/>
<dbReference type="Ensembl" id="ENSMUST00000081851.4">
    <molecule id="Q9QYM9-1"/>
    <property type="protein sequence ID" value="ENSMUSP00000080533.4"/>
    <property type="gene ID" value="ENSMUSG00000026109.15"/>
</dbReference>
<dbReference type="GeneID" id="56363"/>
<dbReference type="KEGG" id="mmu:56363"/>
<dbReference type="UCSC" id="uc007axj.1">
    <molecule id="Q9QYM9-1"/>
    <property type="organism name" value="mouse"/>
</dbReference>
<dbReference type="AGR" id="MGI:1861735"/>
<dbReference type="CTD" id="23671"/>
<dbReference type="MGI" id="MGI:1861735">
    <property type="gene designation" value="Tmeff2"/>
</dbReference>
<dbReference type="VEuPathDB" id="HostDB:ENSMUSG00000026109"/>
<dbReference type="eggNOG" id="KOG3649">
    <property type="taxonomic scope" value="Eukaryota"/>
</dbReference>
<dbReference type="GeneTree" id="ENSGT00940000156056"/>
<dbReference type="HOGENOM" id="CLU_048579_1_0_1"/>
<dbReference type="InParanoid" id="Q9QYM9"/>
<dbReference type="OMA" id="HCQGQTL"/>
<dbReference type="OrthoDB" id="328123at2759"/>
<dbReference type="PhylomeDB" id="Q9QYM9"/>
<dbReference type="TreeFam" id="TF330868"/>
<dbReference type="BioGRID-ORCS" id="56363">
    <property type="hits" value="3 hits in 78 CRISPR screens"/>
</dbReference>
<dbReference type="PRO" id="PR:Q9QYM9"/>
<dbReference type="Proteomes" id="UP000000589">
    <property type="component" value="Chromosome 1"/>
</dbReference>
<dbReference type="RNAct" id="Q9QYM9">
    <property type="molecule type" value="protein"/>
</dbReference>
<dbReference type="Bgee" id="ENSMUSG00000026109">
    <property type="expression patterns" value="Expressed in ventral horn of spinal cord and 196 other cell types or tissues"/>
</dbReference>
<dbReference type="ExpressionAtlas" id="Q9QYM9">
    <property type="expression patterns" value="baseline and differential"/>
</dbReference>
<dbReference type="GO" id="GO:0016020">
    <property type="term" value="C:membrane"/>
    <property type="evidence" value="ECO:0007669"/>
    <property type="project" value="UniProtKB-SubCell"/>
</dbReference>
<dbReference type="GO" id="GO:0030336">
    <property type="term" value="P:negative regulation of cell migration"/>
    <property type="evidence" value="ECO:0000266"/>
    <property type="project" value="MGI"/>
</dbReference>
<dbReference type="GO" id="GO:0045720">
    <property type="term" value="P:negative regulation of integrin biosynthetic process"/>
    <property type="evidence" value="ECO:0000266"/>
    <property type="project" value="MGI"/>
</dbReference>
<dbReference type="GO" id="GO:0051497">
    <property type="term" value="P:negative regulation of stress fiber assembly"/>
    <property type="evidence" value="ECO:0000266"/>
    <property type="project" value="MGI"/>
</dbReference>
<dbReference type="GO" id="GO:0044319">
    <property type="term" value="P:wound healing, spreading of cells"/>
    <property type="evidence" value="ECO:0000266"/>
    <property type="project" value="MGI"/>
</dbReference>
<dbReference type="CDD" id="cd00104">
    <property type="entry name" value="KAZAL_FS"/>
    <property type="match status" value="2"/>
</dbReference>
<dbReference type="FunFam" id="2.10.25.10:FF:000234">
    <property type="entry name" value="tomoregulin-2 isoform X1"/>
    <property type="match status" value="1"/>
</dbReference>
<dbReference type="FunFam" id="3.30.60.30:FF:000002">
    <property type="entry name" value="tomoregulin-2 isoform X1"/>
    <property type="match status" value="1"/>
</dbReference>
<dbReference type="FunFam" id="3.30.60.30:FF:000020">
    <property type="entry name" value="tomoregulin-2 isoform X2"/>
    <property type="match status" value="1"/>
</dbReference>
<dbReference type="Gene3D" id="3.30.60.30">
    <property type="match status" value="2"/>
</dbReference>
<dbReference type="Gene3D" id="2.10.25.10">
    <property type="entry name" value="Laminin"/>
    <property type="match status" value="1"/>
</dbReference>
<dbReference type="InterPro" id="IPR000742">
    <property type="entry name" value="EGF-like_dom"/>
</dbReference>
<dbReference type="InterPro" id="IPR002350">
    <property type="entry name" value="Kazal_dom"/>
</dbReference>
<dbReference type="InterPro" id="IPR036058">
    <property type="entry name" value="Kazal_dom_sf"/>
</dbReference>
<dbReference type="PANTHER" id="PTHR21632">
    <property type="entry name" value="REGULATORY PROTEIN ZESTE"/>
    <property type="match status" value="1"/>
</dbReference>
<dbReference type="PANTHER" id="PTHR21632:SF5">
    <property type="entry name" value="TOMOREGULIN-2 ISOFORM X1"/>
    <property type="match status" value="1"/>
</dbReference>
<dbReference type="Pfam" id="PF07648">
    <property type="entry name" value="Kazal_2"/>
    <property type="match status" value="2"/>
</dbReference>
<dbReference type="SMART" id="SM00280">
    <property type="entry name" value="KAZAL"/>
    <property type="match status" value="2"/>
</dbReference>
<dbReference type="SUPFAM" id="SSF57196">
    <property type="entry name" value="EGF/Laminin"/>
    <property type="match status" value="1"/>
</dbReference>
<dbReference type="SUPFAM" id="SSF100895">
    <property type="entry name" value="Kazal-type serine protease inhibitors"/>
    <property type="match status" value="2"/>
</dbReference>
<dbReference type="PROSITE" id="PS00022">
    <property type="entry name" value="EGF_1"/>
    <property type="match status" value="1"/>
</dbReference>
<dbReference type="PROSITE" id="PS01186">
    <property type="entry name" value="EGF_2"/>
    <property type="match status" value="1"/>
</dbReference>
<dbReference type="PROSITE" id="PS50026">
    <property type="entry name" value="EGF_3"/>
    <property type="match status" value="1"/>
</dbReference>
<dbReference type="PROSITE" id="PS51465">
    <property type="entry name" value="KAZAL_2"/>
    <property type="match status" value="2"/>
</dbReference>
<accession>Q9QYM9</accession>
<accession>Q3UY20</accession>
<accession>Q8CDH1</accession>
<accession>Q9JJE3</accession>
<comment type="function">
    <text evidence="2">May be a survival factor for hippocampal and mesencephalic neurons. The shedded form may up-regulate cell proliferation (By similarity).</text>
</comment>
<comment type="subcellular location">
    <subcellularLocation>
        <location evidence="10">Membrane</location>
        <topology evidence="10">Single-pass type I membrane protein</topology>
    </subcellularLocation>
</comment>
<comment type="alternative products">
    <event type="alternative splicing"/>
    <isoform>
        <id>Q9QYM9-1</id>
        <name>1</name>
        <sequence type="displayed"/>
    </isoform>
    <isoform>
        <id>Q9QYM9-2</id>
        <name>2</name>
        <sequence type="described" ref="VSP_014314"/>
    </isoform>
</comment>
<comment type="tissue specificity">
    <text evidence="8">Widely expressed in the brain. In the olfactory bulb expressed in mitral cell, granule, and glomerular layers. In the hippocampus expressed in hippocampal cornu ammonis, pyramidal layer, dentate gyrus, and substantia nigra pars compacta.</text>
</comment>
<comment type="developmental stage">
    <text evidence="7">First detected at 11 dpc, reaches a maximum at 15 dpc, and remains constant through 17 dpc.</text>
</comment>
<comment type="PTM">
    <text evidence="2">O-glycosylated; contains chondroitin sulfate glycosaminoglycans.</text>
</comment>
<comment type="PTM">
    <text evidence="2">A soluble form (TMEFF2-ECD) is produced by proteolytic shedding. This shedding can be induced by phorbol ester or pro-inflammatory cytokines such as TNFalpha, and is mediated by a metalloproteinase ADAM (By similarity).</text>
</comment>
<comment type="similarity">
    <text evidence="10">Belongs to the tomoregulin family.</text>
</comment>
<comment type="sequence caution" evidence="10">
    <conflict type="frameshift">
        <sequence resource="EMBL-CDS" id="BAA95049"/>
    </conflict>
</comment>
<evidence type="ECO:0000250" key="1"/>
<evidence type="ECO:0000250" key="2">
    <source>
        <dbReference type="UniProtKB" id="Q9UIK5"/>
    </source>
</evidence>
<evidence type="ECO:0000255" key="3"/>
<evidence type="ECO:0000255" key="4">
    <source>
        <dbReference type="PROSITE-ProRule" id="PRU00076"/>
    </source>
</evidence>
<evidence type="ECO:0000255" key="5">
    <source>
        <dbReference type="PROSITE-ProRule" id="PRU00798"/>
    </source>
</evidence>
<evidence type="ECO:0000256" key="6">
    <source>
        <dbReference type="SAM" id="MobiDB-lite"/>
    </source>
</evidence>
<evidence type="ECO:0000269" key="7">
    <source>
    </source>
</evidence>
<evidence type="ECO:0000269" key="8">
    <source>
    </source>
</evidence>
<evidence type="ECO:0000303" key="9">
    <source>
    </source>
</evidence>
<evidence type="ECO:0000305" key="10"/>
<reference key="1">
    <citation type="journal article" date="2000" name="Genomics">
        <title>Identification and characterization of TMEFF2, a novel survival factor for hippocampal and mesencephalic neurons.</title>
        <authorList>
            <person name="Horie M."/>
            <person name="Mitsumoto Y."/>
            <person name="Kyushiki H."/>
            <person name="Kanemoto N."/>
            <person name="Watanabe A."/>
            <person name="Taniguchi Y."/>
            <person name="Nishino N."/>
            <person name="Okamoto T."/>
            <person name="Kondo M."/>
            <person name="Mori T."/>
            <person name="Noguchi K."/>
            <person name="Nakamura Y."/>
            <person name="Takahashi E."/>
            <person name="Tanigami A."/>
        </authorList>
    </citation>
    <scope>NUCLEOTIDE SEQUENCE [MRNA] (ISOFORM 1)</scope>
    <scope>TISSUE SPECIFICITY</scope>
    <source>
        <tissue>Brain</tissue>
    </source>
</reference>
<reference key="2">
    <citation type="submission" date="2000-04" db="EMBL/GenBank/DDBJ databases">
        <title>Isolation of full-length cDNA clones from mouse brain cDNA library made by oligo-capping method.</title>
        <authorList>
            <person name="Osada N."/>
            <person name="Kusuda J."/>
            <person name="Tanuma R."/>
            <person name="Ito A."/>
            <person name="Hirata M."/>
            <person name="Sugano S."/>
            <person name="Hashimoto K."/>
        </authorList>
    </citation>
    <scope>NUCLEOTIDE SEQUENCE [LARGE SCALE MRNA] (ISOFORM 1)</scope>
    <source>
        <strain>C57BL/6J</strain>
        <tissue>Brain</tissue>
    </source>
</reference>
<reference key="3">
    <citation type="journal article" date="2005" name="Science">
        <title>The transcriptional landscape of the mammalian genome.</title>
        <authorList>
            <person name="Carninci P."/>
            <person name="Kasukawa T."/>
            <person name="Katayama S."/>
            <person name="Gough J."/>
            <person name="Frith M.C."/>
            <person name="Maeda N."/>
            <person name="Oyama R."/>
            <person name="Ravasi T."/>
            <person name="Lenhard B."/>
            <person name="Wells C."/>
            <person name="Kodzius R."/>
            <person name="Shimokawa K."/>
            <person name="Bajic V.B."/>
            <person name="Brenner S.E."/>
            <person name="Batalov S."/>
            <person name="Forrest A.R."/>
            <person name="Zavolan M."/>
            <person name="Davis M.J."/>
            <person name="Wilming L.G."/>
            <person name="Aidinis V."/>
            <person name="Allen J.E."/>
            <person name="Ambesi-Impiombato A."/>
            <person name="Apweiler R."/>
            <person name="Aturaliya R.N."/>
            <person name="Bailey T.L."/>
            <person name="Bansal M."/>
            <person name="Baxter L."/>
            <person name="Beisel K.W."/>
            <person name="Bersano T."/>
            <person name="Bono H."/>
            <person name="Chalk A.M."/>
            <person name="Chiu K.P."/>
            <person name="Choudhary V."/>
            <person name="Christoffels A."/>
            <person name="Clutterbuck D.R."/>
            <person name="Crowe M.L."/>
            <person name="Dalla E."/>
            <person name="Dalrymple B.P."/>
            <person name="de Bono B."/>
            <person name="Della Gatta G."/>
            <person name="di Bernardo D."/>
            <person name="Down T."/>
            <person name="Engstrom P."/>
            <person name="Fagiolini M."/>
            <person name="Faulkner G."/>
            <person name="Fletcher C.F."/>
            <person name="Fukushima T."/>
            <person name="Furuno M."/>
            <person name="Futaki S."/>
            <person name="Gariboldi M."/>
            <person name="Georgii-Hemming P."/>
            <person name="Gingeras T.R."/>
            <person name="Gojobori T."/>
            <person name="Green R.E."/>
            <person name="Gustincich S."/>
            <person name="Harbers M."/>
            <person name="Hayashi Y."/>
            <person name="Hensch T.K."/>
            <person name="Hirokawa N."/>
            <person name="Hill D."/>
            <person name="Huminiecki L."/>
            <person name="Iacono M."/>
            <person name="Ikeo K."/>
            <person name="Iwama A."/>
            <person name="Ishikawa T."/>
            <person name="Jakt M."/>
            <person name="Kanapin A."/>
            <person name="Katoh M."/>
            <person name="Kawasawa Y."/>
            <person name="Kelso J."/>
            <person name="Kitamura H."/>
            <person name="Kitano H."/>
            <person name="Kollias G."/>
            <person name="Krishnan S.P."/>
            <person name="Kruger A."/>
            <person name="Kummerfeld S.K."/>
            <person name="Kurochkin I.V."/>
            <person name="Lareau L.F."/>
            <person name="Lazarevic D."/>
            <person name="Lipovich L."/>
            <person name="Liu J."/>
            <person name="Liuni S."/>
            <person name="McWilliam S."/>
            <person name="Madan Babu M."/>
            <person name="Madera M."/>
            <person name="Marchionni L."/>
            <person name="Matsuda H."/>
            <person name="Matsuzawa S."/>
            <person name="Miki H."/>
            <person name="Mignone F."/>
            <person name="Miyake S."/>
            <person name="Morris K."/>
            <person name="Mottagui-Tabar S."/>
            <person name="Mulder N."/>
            <person name="Nakano N."/>
            <person name="Nakauchi H."/>
            <person name="Ng P."/>
            <person name="Nilsson R."/>
            <person name="Nishiguchi S."/>
            <person name="Nishikawa S."/>
            <person name="Nori F."/>
            <person name="Ohara O."/>
            <person name="Okazaki Y."/>
            <person name="Orlando V."/>
            <person name="Pang K.C."/>
            <person name="Pavan W.J."/>
            <person name="Pavesi G."/>
            <person name="Pesole G."/>
            <person name="Petrovsky N."/>
            <person name="Piazza S."/>
            <person name="Reed J."/>
            <person name="Reid J.F."/>
            <person name="Ring B.Z."/>
            <person name="Ringwald M."/>
            <person name="Rost B."/>
            <person name="Ruan Y."/>
            <person name="Salzberg S.L."/>
            <person name="Sandelin A."/>
            <person name="Schneider C."/>
            <person name="Schoenbach C."/>
            <person name="Sekiguchi K."/>
            <person name="Semple C.A."/>
            <person name="Seno S."/>
            <person name="Sessa L."/>
            <person name="Sheng Y."/>
            <person name="Shibata Y."/>
            <person name="Shimada H."/>
            <person name="Shimada K."/>
            <person name="Silva D."/>
            <person name="Sinclair B."/>
            <person name="Sperling S."/>
            <person name="Stupka E."/>
            <person name="Sugiura K."/>
            <person name="Sultana R."/>
            <person name="Takenaka Y."/>
            <person name="Taki K."/>
            <person name="Tammoja K."/>
            <person name="Tan S.L."/>
            <person name="Tang S."/>
            <person name="Taylor M.S."/>
            <person name="Tegner J."/>
            <person name="Teichmann S.A."/>
            <person name="Ueda H.R."/>
            <person name="van Nimwegen E."/>
            <person name="Verardo R."/>
            <person name="Wei C.L."/>
            <person name="Yagi K."/>
            <person name="Yamanishi H."/>
            <person name="Zabarovsky E."/>
            <person name="Zhu S."/>
            <person name="Zimmer A."/>
            <person name="Hide W."/>
            <person name="Bult C."/>
            <person name="Grimmond S.M."/>
            <person name="Teasdale R.D."/>
            <person name="Liu E.T."/>
            <person name="Brusic V."/>
            <person name="Quackenbush J."/>
            <person name="Wahlestedt C."/>
            <person name="Mattick J.S."/>
            <person name="Hume D.A."/>
            <person name="Kai C."/>
            <person name="Sasaki D."/>
            <person name="Tomaru Y."/>
            <person name="Fukuda S."/>
            <person name="Kanamori-Katayama M."/>
            <person name="Suzuki M."/>
            <person name="Aoki J."/>
            <person name="Arakawa T."/>
            <person name="Iida J."/>
            <person name="Imamura K."/>
            <person name="Itoh M."/>
            <person name="Kato T."/>
            <person name="Kawaji H."/>
            <person name="Kawagashira N."/>
            <person name="Kawashima T."/>
            <person name="Kojima M."/>
            <person name="Kondo S."/>
            <person name="Konno H."/>
            <person name="Nakano K."/>
            <person name="Ninomiya N."/>
            <person name="Nishio T."/>
            <person name="Okada M."/>
            <person name="Plessy C."/>
            <person name="Shibata K."/>
            <person name="Shiraki T."/>
            <person name="Suzuki S."/>
            <person name="Tagami M."/>
            <person name="Waki K."/>
            <person name="Watahiki A."/>
            <person name="Okamura-Oho Y."/>
            <person name="Suzuki H."/>
            <person name="Kawai J."/>
            <person name="Hayashizaki Y."/>
        </authorList>
    </citation>
    <scope>NUCLEOTIDE SEQUENCE [LARGE SCALE MRNA] (ISOFORMS 1 AND 2)</scope>
    <source>
        <strain>C57BL/6J</strain>
        <tissue>Head</tissue>
        <tissue>Olfactory bulb</tissue>
        <tissue>Skin</tissue>
    </source>
</reference>
<reference key="4">
    <citation type="journal article" date="2004" name="Genome Res.">
        <title>The status, quality, and expansion of the NIH full-length cDNA project: the Mammalian Gene Collection (MGC).</title>
        <authorList>
            <consortium name="The MGC Project Team"/>
        </authorList>
    </citation>
    <scope>NUCLEOTIDE SEQUENCE [LARGE SCALE MRNA] (ISOFORM 1)</scope>
    <source>
        <strain>C57BL/6J</strain>
        <tissue>Mammary gland</tissue>
    </source>
</reference>
<reference key="5">
    <citation type="journal article" date="1999" name="Biochem. Biophys. Res. Commun.">
        <title>A novel epidermal growth factor-like molecule containing two follistatin modules stimulates tyrosine phosphorylation of erbB-4 in MKN28 gastric cancer cells.</title>
        <authorList>
            <person name="Uchida T."/>
            <person name="Wada K."/>
            <person name="Akamatsu T."/>
            <person name="Yonezawa M."/>
            <person name="Noguchi H."/>
            <person name="Mizoguchi A."/>
            <person name="Kasuga M."/>
            <person name="Sakamoto C."/>
        </authorList>
    </citation>
    <scope>DEVELOPMENTAL STAGE</scope>
</reference>
<gene>
    <name type="primary">Tmeff2</name>
    <name type="ORF">MNCb-1026</name>
</gene>
<keyword id="KW-0025">Alternative splicing</keyword>
<keyword id="KW-1015">Disulfide bond</keyword>
<keyword id="KW-0245">EGF-like domain</keyword>
<keyword id="KW-0325">Glycoprotein</keyword>
<keyword id="KW-0472">Membrane</keyword>
<keyword id="KW-0654">Proteoglycan</keyword>
<keyword id="KW-1185">Reference proteome</keyword>
<keyword id="KW-0677">Repeat</keyword>
<keyword id="KW-0732">Signal</keyword>
<keyword id="KW-0812">Transmembrane</keyword>
<keyword id="KW-1133">Transmembrane helix</keyword>
<protein>
    <recommendedName>
        <fullName>Tomoregulin-2</fullName>
        <shortName>TR-2</shortName>
    </recommendedName>
    <alternativeName>
        <fullName>Transmembrane protein with EGF-like and two follistatin-like domains</fullName>
    </alternativeName>
</protein>
<name>TEFF2_MOUSE</name>
<feature type="signal peptide" evidence="1">
    <location>
        <begin position="1"/>
        <end position="40"/>
    </location>
</feature>
<feature type="chain" id="PRO_0000016588" description="Tomoregulin-2">
    <location>
        <begin position="41"/>
        <end position="374"/>
    </location>
</feature>
<feature type="topological domain" description="Extracellular" evidence="3">
    <location>
        <begin position="41"/>
        <end position="320"/>
    </location>
</feature>
<feature type="transmembrane region" description="Helical" evidence="3">
    <location>
        <begin position="321"/>
        <end position="341"/>
    </location>
</feature>
<feature type="topological domain" description="Cytoplasmic" evidence="3">
    <location>
        <begin position="342"/>
        <end position="374"/>
    </location>
</feature>
<feature type="domain" description="Kazal-like 1" evidence="5">
    <location>
        <begin position="90"/>
        <end position="137"/>
    </location>
</feature>
<feature type="domain" description="Kazal-like 2" evidence="5">
    <location>
        <begin position="181"/>
        <end position="229"/>
    </location>
</feature>
<feature type="domain" description="EGF-like" evidence="4">
    <location>
        <begin position="261"/>
        <end position="301"/>
    </location>
</feature>
<feature type="region of interest" description="Required for shedding" evidence="2">
    <location>
        <begin position="303"/>
        <end position="320"/>
    </location>
</feature>
<feature type="region of interest" description="Disordered" evidence="6">
    <location>
        <begin position="353"/>
        <end position="374"/>
    </location>
</feature>
<feature type="compositionally biased region" description="Polar residues" evidence="6">
    <location>
        <begin position="356"/>
        <end position="374"/>
    </location>
</feature>
<feature type="site" description="Reactive bond" evidence="5">
    <location>
        <begin position="97"/>
        <end position="98"/>
    </location>
</feature>
<feature type="site" description="Reactive bond" evidence="5">
    <location>
        <begin position="188"/>
        <end position="189"/>
    </location>
</feature>
<feature type="glycosylation site" description="N-linked (GlcNAc...) asparagine" evidence="3">
    <location>
        <position position="55"/>
    </location>
</feature>
<feature type="glycosylation site" description="N-linked (GlcNAc...) asparagine" evidence="3">
    <location>
        <position position="230"/>
    </location>
</feature>
<feature type="disulfide bond" evidence="5">
    <location>
        <begin position="91"/>
        <end position="121"/>
    </location>
</feature>
<feature type="disulfide bond" evidence="5">
    <location>
        <begin position="95"/>
        <end position="114"/>
    </location>
</feature>
<feature type="disulfide bond" evidence="5">
    <location>
        <begin position="103"/>
        <end position="135"/>
    </location>
</feature>
<feature type="disulfide bond" evidence="5">
    <location>
        <begin position="182"/>
        <end position="213"/>
    </location>
</feature>
<feature type="disulfide bond" evidence="5">
    <location>
        <begin position="186"/>
        <end position="206"/>
    </location>
</feature>
<feature type="disulfide bond" evidence="5">
    <location>
        <begin position="195"/>
        <end position="227"/>
    </location>
</feature>
<feature type="disulfide bond" evidence="4">
    <location>
        <begin position="265"/>
        <end position="278"/>
    </location>
</feature>
<feature type="disulfide bond" evidence="4">
    <location>
        <begin position="273"/>
        <end position="289"/>
    </location>
</feature>
<feature type="disulfide bond" evidence="4">
    <location>
        <begin position="291"/>
        <end position="300"/>
    </location>
</feature>
<feature type="splice variant" id="VSP_014314" description="In isoform 2." evidence="9">
    <original>VHEGSGETSQKETSTCDICQFGAECDEDAEDVWCVCNIDCSQTNFNPLCASDGKSYDNACQIKEASCQKQEKIEVMSLGRCQDNTTTTTKSEDGHYARTDYAENANKLEESAREHH</original>
    <variation>EKFSKVMLILKPCTASSLEETNSKEIILCNPSNTHLLKKNENANLTCWSEPFLQAYGLMRTWNSRQREAAKGITETRFLPPPSAYCLGIFIGANVKINSEALFRQWTVLKGTIPVP</variation>
    <location>
        <begin position="147"/>
        <end position="262"/>
    </location>
</feature>
<sequence>MVLWESPRQCSSWTLCEGFCWLLLLPVTLLIIARPVKLAAFPTSLSDCQTPTGWNCSGYDDRENDLFLCDTNTCKFDGECLRIGDTVTCVCQFKCNSDYVPVCGSNGESYQNECYLRQAACKQQSEILVVSEGSCATDTGSGSGDGVHEGSGETSQKETSTCDICQFGAECDEDAEDVWCVCNIDCSQTNFNPLCASDGKSYDNACQIKEASCQKQEKIEVMSLGRCQDNTTTTTKSEDGHYARTDYAENANKLEESAREHHIPCPEHYNGFCMHGKCEHSINMQEPSCRCDAGYTGQHCEKKDYSVLYVVPGPVRFQYVLIAAVIGTIQIAVICVVVLCITRKCPRSNRIHRQKQNTGHYSSDNTTRASTRLI</sequence>
<organism>
    <name type="scientific">Mus musculus</name>
    <name type="common">Mouse</name>
    <dbReference type="NCBI Taxonomy" id="10090"/>
    <lineage>
        <taxon>Eukaryota</taxon>
        <taxon>Metazoa</taxon>
        <taxon>Chordata</taxon>
        <taxon>Craniata</taxon>
        <taxon>Vertebrata</taxon>
        <taxon>Euteleostomi</taxon>
        <taxon>Mammalia</taxon>
        <taxon>Eutheria</taxon>
        <taxon>Euarchontoglires</taxon>
        <taxon>Glires</taxon>
        <taxon>Rodentia</taxon>
        <taxon>Myomorpha</taxon>
        <taxon>Muroidea</taxon>
        <taxon>Muridae</taxon>
        <taxon>Murinae</taxon>
        <taxon>Mus</taxon>
        <taxon>Mus</taxon>
    </lineage>
</organism>
<proteinExistence type="evidence at transcript level"/>